<gene>
    <name type="primary">ddi2</name>
</gene>
<name>DDI2_XENLA</name>
<reference key="1">
    <citation type="submission" date="2003-01" db="EMBL/GenBank/DDBJ databases">
        <authorList>
            <consortium name="NIH - Xenopus Gene Collection (XGC) project"/>
        </authorList>
    </citation>
    <scope>NUCLEOTIDE SEQUENCE [LARGE SCALE MRNA]</scope>
    <source>
        <tissue>Embryo</tissue>
    </source>
</reference>
<organism>
    <name type="scientific">Xenopus laevis</name>
    <name type="common">African clawed frog</name>
    <dbReference type="NCBI Taxonomy" id="8355"/>
    <lineage>
        <taxon>Eukaryota</taxon>
        <taxon>Metazoa</taxon>
        <taxon>Chordata</taxon>
        <taxon>Craniata</taxon>
        <taxon>Vertebrata</taxon>
        <taxon>Euteleostomi</taxon>
        <taxon>Amphibia</taxon>
        <taxon>Batrachia</taxon>
        <taxon>Anura</taxon>
        <taxon>Pipoidea</taxon>
        <taxon>Pipidae</taxon>
        <taxon>Xenopodinae</taxon>
        <taxon>Xenopus</taxon>
        <taxon>Xenopus</taxon>
    </lineage>
</organism>
<comment type="function">
    <text evidence="1">Aspartic protease that mediates the cleavage of NFE2L1/NRF1 at 'Leu-104', thereby promoting release of NFE2L1/NRF1 from the endoplasmic reticulum membrane. Ubiquitination of NFE2L1/NRF1 is a prerequisite for cleavage, suggesting that DDI2 specifically recognizes and binds ubiquitinated NFE2L1/NRF1. Seems to act as a proteasomal shuttle which links the proteasome and replication fork proteins like RTF2. Required for cellular survival following replication stress.</text>
</comment>
<comment type="subunit">
    <text evidence="1">Homodimer.</text>
</comment>
<comment type="subcellular location">
    <subcellularLocation>
        <location evidence="1">Cytoplasm</location>
        <location evidence="1">Cytosol</location>
    </subcellularLocation>
    <subcellularLocation>
        <location evidence="1">Chromosome</location>
    </subcellularLocation>
</comment>
<comment type="similarity">
    <text evidence="4">Belongs to the DDI1 family.</text>
</comment>
<comment type="caution">
    <text evidence="1">Although this protein contains the conserved Asp-246 that functions as an active site, this protein does not have proteolytic activity, and may therefore be catalytically inactive.</text>
</comment>
<proteinExistence type="evidence at transcript level"/>
<keyword id="KW-0064">Aspartyl protease</keyword>
<keyword id="KW-0158">Chromosome</keyword>
<keyword id="KW-0963">Cytoplasm</keyword>
<keyword id="KW-0378">Hydrolase</keyword>
<keyword id="KW-0645">Protease</keyword>
<keyword id="KW-1185">Reference proteome</keyword>
<evidence type="ECO:0000250" key="1">
    <source>
        <dbReference type="UniProtKB" id="Q5TDH0"/>
    </source>
</evidence>
<evidence type="ECO:0000255" key="2">
    <source>
        <dbReference type="PROSITE-ProRule" id="PRU00214"/>
    </source>
</evidence>
<evidence type="ECO:0000256" key="3">
    <source>
        <dbReference type="SAM" id="MobiDB-lite"/>
    </source>
</evidence>
<evidence type="ECO:0000305" key="4"/>
<feature type="chain" id="PRO_0000287093" description="Protein DDI1 homolog 2">
    <location>
        <begin position="1"/>
        <end position="393"/>
    </location>
</feature>
<feature type="domain" description="Ubiquitin-like" evidence="2">
    <location>
        <begin position="1"/>
        <end position="81"/>
    </location>
</feature>
<feature type="region of interest" description="Disordered" evidence="3">
    <location>
        <begin position="82"/>
        <end position="127"/>
    </location>
</feature>
<feature type="short sequence motif" description="Ubiquitin-binding" evidence="4">
    <location>
        <begin position="370"/>
        <end position="389"/>
    </location>
</feature>
<feature type="compositionally biased region" description="Pro residues" evidence="3">
    <location>
        <begin position="107"/>
        <end position="118"/>
    </location>
</feature>
<feature type="active site" evidence="4">
    <location>
        <position position="246"/>
    </location>
</feature>
<dbReference type="EC" id="3.4.23.-" evidence="1"/>
<dbReference type="EMBL" id="BC043869">
    <property type="protein sequence ID" value="AAH43869.1"/>
    <property type="molecule type" value="mRNA"/>
</dbReference>
<dbReference type="RefSeq" id="NP_001079499.1">
    <property type="nucleotide sequence ID" value="NM_001086030.1"/>
</dbReference>
<dbReference type="SMR" id="Q7ZYA7"/>
<dbReference type="MEROPS" id="A28.003"/>
<dbReference type="DNASU" id="379186"/>
<dbReference type="AGR" id="Xenbase:XB-GENE-6073074"/>
<dbReference type="Xenbase" id="XB-GENE-6073074">
    <property type="gene designation" value="ddi2.L"/>
</dbReference>
<dbReference type="Proteomes" id="UP000186698">
    <property type="component" value="Unplaced"/>
</dbReference>
<dbReference type="Bgee" id="379186">
    <property type="expression patterns" value="Expressed in neurula embryo and 19 other cell types or tissues"/>
</dbReference>
<dbReference type="GO" id="GO:0005694">
    <property type="term" value="C:chromosome"/>
    <property type="evidence" value="ECO:0007669"/>
    <property type="project" value="UniProtKB-SubCell"/>
</dbReference>
<dbReference type="GO" id="GO:0005829">
    <property type="term" value="C:cytosol"/>
    <property type="evidence" value="ECO:0007669"/>
    <property type="project" value="UniProtKB-SubCell"/>
</dbReference>
<dbReference type="GO" id="GO:0004190">
    <property type="term" value="F:aspartic-type endopeptidase activity"/>
    <property type="evidence" value="ECO:0000250"/>
    <property type="project" value="UniProtKB"/>
</dbReference>
<dbReference type="GO" id="GO:0042802">
    <property type="term" value="F:identical protein binding"/>
    <property type="evidence" value="ECO:0000250"/>
    <property type="project" value="UniProtKB"/>
</dbReference>
<dbReference type="GO" id="GO:0072711">
    <property type="term" value="P:cellular response to hydroxyurea"/>
    <property type="evidence" value="ECO:0000250"/>
    <property type="project" value="UniProtKB"/>
</dbReference>
<dbReference type="GO" id="GO:0010498">
    <property type="term" value="P:proteasomal protein catabolic process"/>
    <property type="evidence" value="ECO:0000250"/>
    <property type="project" value="UniProtKB"/>
</dbReference>
<dbReference type="GO" id="GO:0016485">
    <property type="term" value="P:protein processing"/>
    <property type="evidence" value="ECO:0000250"/>
    <property type="project" value="UniProtKB"/>
</dbReference>
<dbReference type="GO" id="GO:0097752">
    <property type="term" value="P:regulation of DNA stability"/>
    <property type="evidence" value="ECO:0000250"/>
    <property type="project" value="UniProtKB"/>
</dbReference>
<dbReference type="GO" id="GO:0031647">
    <property type="term" value="P:regulation of protein stability"/>
    <property type="evidence" value="ECO:0000250"/>
    <property type="project" value="UniProtKB"/>
</dbReference>
<dbReference type="CDD" id="cd05479">
    <property type="entry name" value="RP_DDI"/>
    <property type="match status" value="1"/>
</dbReference>
<dbReference type="CDD" id="cd01796">
    <property type="entry name" value="Ubl_Ddi1_like"/>
    <property type="match status" value="1"/>
</dbReference>
<dbReference type="FunFam" id="2.40.70.10:FF:000005">
    <property type="entry name" value="DNA damage inducible 1 homolog 2"/>
    <property type="match status" value="1"/>
</dbReference>
<dbReference type="FunFam" id="3.10.20.90:FF:000107">
    <property type="entry name" value="protein DDI1 homolog 2 isoform X1"/>
    <property type="match status" value="1"/>
</dbReference>
<dbReference type="Gene3D" id="2.40.70.10">
    <property type="entry name" value="Acid Proteases"/>
    <property type="match status" value="1"/>
</dbReference>
<dbReference type="Gene3D" id="3.10.20.90">
    <property type="entry name" value="Phosphatidylinositol 3-kinase Catalytic Subunit, Chain A, domain 1"/>
    <property type="match status" value="1"/>
</dbReference>
<dbReference type="InterPro" id="IPR033882">
    <property type="entry name" value="DDI1_N"/>
</dbReference>
<dbReference type="InterPro" id="IPR019103">
    <property type="entry name" value="Peptidase_aspartic_DDI1-type"/>
</dbReference>
<dbReference type="InterPro" id="IPR021109">
    <property type="entry name" value="Peptidase_aspartic_dom_sf"/>
</dbReference>
<dbReference type="InterPro" id="IPR000626">
    <property type="entry name" value="Ubiquitin-like_dom"/>
</dbReference>
<dbReference type="InterPro" id="IPR029071">
    <property type="entry name" value="Ubiquitin-like_domsf"/>
</dbReference>
<dbReference type="PANTHER" id="PTHR15397:SF3">
    <property type="entry name" value="DNA DAMAGE INDUCIBLE 1 HOMOLOG 2"/>
    <property type="match status" value="1"/>
</dbReference>
<dbReference type="PANTHER" id="PTHR15397">
    <property type="entry name" value="SODIUM-GLUCOSE COTRANSPORTER REGULATORY PROTEIN -RELATED"/>
    <property type="match status" value="1"/>
</dbReference>
<dbReference type="Pfam" id="PF09668">
    <property type="entry name" value="Asp_protease"/>
    <property type="match status" value="1"/>
</dbReference>
<dbReference type="Pfam" id="PF24669">
    <property type="entry name" value="Ddi2_HDD"/>
    <property type="match status" value="1"/>
</dbReference>
<dbReference type="Pfam" id="PF00240">
    <property type="entry name" value="ubiquitin"/>
    <property type="match status" value="1"/>
</dbReference>
<dbReference type="SUPFAM" id="SSF50630">
    <property type="entry name" value="Acid proteases"/>
    <property type="match status" value="1"/>
</dbReference>
<dbReference type="SUPFAM" id="SSF54236">
    <property type="entry name" value="Ubiquitin-like"/>
    <property type="match status" value="1"/>
</dbReference>
<dbReference type="PROSITE" id="PS50053">
    <property type="entry name" value="UBIQUITIN_2"/>
    <property type="match status" value="1"/>
</dbReference>
<protein>
    <recommendedName>
        <fullName evidence="4">Protein DDI1 homolog 2</fullName>
        <ecNumber evidence="1">3.4.23.-</ecNumber>
    </recommendedName>
</protein>
<sequence>MLITVYCVRRDLSEITFSLEVDGDFELENFRALCELESGIPASDTLIVYAERPLTDNQRSLASYGLKDGDVVILRQKEAPETRPAAPFPGLDFSTIAVPGASSQPDPSQPQAPPPPPDTSSFPQGLDNPALLRQMLLANPHELSLLKERNPPLAEALLSGDLEKFTKVLQEQQQERARREQERIRLYSADPFDLDAQAKIEEDIRQHNIEENMTIAMEEAPESFGQVVMLYINCKVNGYPVKAFVDSGAQMTIMSQACAERCHIMRLVDRRWAGIAKGVGTQKIIGRVHLAQVQIEGDFLPCSFSILEEQPMDMLLGLDMLKRHQCSIDLEKNVLVIGTTGTHTTFLPEGELPECARLAYGPGREEVPPEEIADRELAEVLQKSADEADQQKP</sequence>
<accession>Q7ZYA7</accession>